<gene>
    <name evidence="1" type="primary">glpK</name>
    <name type="ordered locus">Neut_2080</name>
</gene>
<organism>
    <name type="scientific">Nitrosomonas eutropha (strain DSM 101675 / C91 / Nm57)</name>
    <dbReference type="NCBI Taxonomy" id="335283"/>
    <lineage>
        <taxon>Bacteria</taxon>
        <taxon>Pseudomonadati</taxon>
        <taxon>Pseudomonadota</taxon>
        <taxon>Betaproteobacteria</taxon>
        <taxon>Nitrosomonadales</taxon>
        <taxon>Nitrosomonadaceae</taxon>
        <taxon>Nitrosomonas</taxon>
    </lineage>
</organism>
<comment type="function">
    <text evidence="1">Key enzyme in the regulation of glycerol uptake and metabolism. Catalyzes the phosphorylation of glycerol to yield sn-glycerol 3-phosphate.</text>
</comment>
<comment type="catalytic activity">
    <reaction evidence="1">
        <text>glycerol + ATP = sn-glycerol 3-phosphate + ADP + H(+)</text>
        <dbReference type="Rhea" id="RHEA:21644"/>
        <dbReference type="ChEBI" id="CHEBI:15378"/>
        <dbReference type="ChEBI" id="CHEBI:17754"/>
        <dbReference type="ChEBI" id="CHEBI:30616"/>
        <dbReference type="ChEBI" id="CHEBI:57597"/>
        <dbReference type="ChEBI" id="CHEBI:456216"/>
        <dbReference type="EC" id="2.7.1.30"/>
    </reaction>
</comment>
<comment type="activity regulation">
    <text evidence="1">Inhibited by fructose 1,6-bisphosphate (FBP).</text>
</comment>
<comment type="pathway">
    <text evidence="1">Polyol metabolism; glycerol degradation via glycerol kinase pathway; sn-glycerol 3-phosphate from glycerol: step 1/1.</text>
</comment>
<comment type="similarity">
    <text evidence="1">Belongs to the FGGY kinase family.</text>
</comment>
<evidence type="ECO:0000255" key="1">
    <source>
        <dbReference type="HAMAP-Rule" id="MF_00186"/>
    </source>
</evidence>
<name>GLPK_NITEC</name>
<dbReference type="EC" id="2.7.1.30" evidence="1"/>
<dbReference type="EMBL" id="CP000450">
    <property type="protein sequence ID" value="ABI60303.1"/>
    <property type="molecule type" value="Genomic_DNA"/>
</dbReference>
<dbReference type="RefSeq" id="WP_011635100.1">
    <property type="nucleotide sequence ID" value="NC_008344.1"/>
</dbReference>
<dbReference type="SMR" id="Q0AEC9"/>
<dbReference type="STRING" id="335283.Neut_2080"/>
<dbReference type="KEGG" id="net:Neut_2080"/>
<dbReference type="eggNOG" id="COG0554">
    <property type="taxonomic scope" value="Bacteria"/>
</dbReference>
<dbReference type="HOGENOM" id="CLU_009281_2_3_4"/>
<dbReference type="OrthoDB" id="9805576at2"/>
<dbReference type="UniPathway" id="UPA00618">
    <property type="reaction ID" value="UER00672"/>
</dbReference>
<dbReference type="Proteomes" id="UP000001966">
    <property type="component" value="Chromosome"/>
</dbReference>
<dbReference type="GO" id="GO:0005829">
    <property type="term" value="C:cytosol"/>
    <property type="evidence" value="ECO:0007669"/>
    <property type="project" value="TreeGrafter"/>
</dbReference>
<dbReference type="GO" id="GO:0005524">
    <property type="term" value="F:ATP binding"/>
    <property type="evidence" value="ECO:0007669"/>
    <property type="project" value="UniProtKB-UniRule"/>
</dbReference>
<dbReference type="GO" id="GO:0004370">
    <property type="term" value="F:glycerol kinase activity"/>
    <property type="evidence" value="ECO:0000250"/>
    <property type="project" value="UniProtKB"/>
</dbReference>
<dbReference type="GO" id="GO:0019563">
    <property type="term" value="P:glycerol catabolic process"/>
    <property type="evidence" value="ECO:0007669"/>
    <property type="project" value="UniProtKB-UniRule"/>
</dbReference>
<dbReference type="GO" id="GO:0006071">
    <property type="term" value="P:glycerol metabolic process"/>
    <property type="evidence" value="ECO:0000250"/>
    <property type="project" value="UniProtKB"/>
</dbReference>
<dbReference type="GO" id="GO:0006072">
    <property type="term" value="P:glycerol-3-phosphate metabolic process"/>
    <property type="evidence" value="ECO:0007669"/>
    <property type="project" value="InterPro"/>
</dbReference>
<dbReference type="CDD" id="cd07786">
    <property type="entry name" value="FGGY_EcGK_like"/>
    <property type="match status" value="1"/>
</dbReference>
<dbReference type="FunFam" id="3.30.420.40:FF:000007">
    <property type="entry name" value="Glycerol kinase"/>
    <property type="match status" value="1"/>
</dbReference>
<dbReference type="FunFam" id="3.30.420.40:FF:000177">
    <property type="entry name" value="Glycerol kinase"/>
    <property type="match status" value="1"/>
</dbReference>
<dbReference type="Gene3D" id="3.30.420.40">
    <property type="match status" value="2"/>
</dbReference>
<dbReference type="HAMAP" id="MF_00186">
    <property type="entry name" value="Glycerol_kin"/>
    <property type="match status" value="1"/>
</dbReference>
<dbReference type="InterPro" id="IPR043129">
    <property type="entry name" value="ATPase_NBD"/>
</dbReference>
<dbReference type="InterPro" id="IPR000577">
    <property type="entry name" value="Carb_kinase_FGGY"/>
</dbReference>
<dbReference type="InterPro" id="IPR018483">
    <property type="entry name" value="Carb_kinase_FGGY_CS"/>
</dbReference>
<dbReference type="InterPro" id="IPR018485">
    <property type="entry name" value="FGGY_C"/>
</dbReference>
<dbReference type="InterPro" id="IPR018484">
    <property type="entry name" value="FGGY_N"/>
</dbReference>
<dbReference type="InterPro" id="IPR005999">
    <property type="entry name" value="Glycerol_kin"/>
</dbReference>
<dbReference type="NCBIfam" id="TIGR01311">
    <property type="entry name" value="glycerol_kin"/>
    <property type="match status" value="1"/>
</dbReference>
<dbReference type="NCBIfam" id="NF000756">
    <property type="entry name" value="PRK00047.1"/>
    <property type="match status" value="1"/>
</dbReference>
<dbReference type="PANTHER" id="PTHR10196:SF78">
    <property type="entry name" value="GLYCEROL KINASE"/>
    <property type="match status" value="1"/>
</dbReference>
<dbReference type="PANTHER" id="PTHR10196">
    <property type="entry name" value="SUGAR KINASE"/>
    <property type="match status" value="1"/>
</dbReference>
<dbReference type="Pfam" id="PF02782">
    <property type="entry name" value="FGGY_C"/>
    <property type="match status" value="1"/>
</dbReference>
<dbReference type="Pfam" id="PF00370">
    <property type="entry name" value="FGGY_N"/>
    <property type="match status" value="1"/>
</dbReference>
<dbReference type="PIRSF" id="PIRSF000538">
    <property type="entry name" value="GlpK"/>
    <property type="match status" value="1"/>
</dbReference>
<dbReference type="SUPFAM" id="SSF53067">
    <property type="entry name" value="Actin-like ATPase domain"/>
    <property type="match status" value="2"/>
</dbReference>
<dbReference type="PROSITE" id="PS00933">
    <property type="entry name" value="FGGY_KINASES_1"/>
    <property type="match status" value="1"/>
</dbReference>
<dbReference type="PROSITE" id="PS00445">
    <property type="entry name" value="FGGY_KINASES_2"/>
    <property type="match status" value="1"/>
</dbReference>
<keyword id="KW-0067">ATP-binding</keyword>
<keyword id="KW-0319">Glycerol metabolism</keyword>
<keyword id="KW-0418">Kinase</keyword>
<keyword id="KW-0547">Nucleotide-binding</keyword>
<keyword id="KW-0808">Transferase</keyword>
<sequence length="499" mass="55255">MNNQPVILAIDQGTTSTRAILFSATLEILAVQQKELKLHYPHKGWVEQNPEAIWQDTLEVCHAVLEHNVSMVGSVAAIGITNQRETTILWDRKTGKPVYPAIVWQDRRTDIGCEQLKAQGYEPMVTARTGLLFDPYFSATKIAWILDNVEGVRSRAMRGELAFGTVDCYLLWHLTGGKVHATDVTNAARTLLFNIVEQKWDADLLTLFNIPETILPEVRDNAARFGMTDRILFGRGIPIGGMAGDQHAALIGQRCFRPGMVKSTYGTGCFALMNIGSDFKPSQHRLLTTPAYRLNGKMVYAIEGSIFIAGAAIQWLRDELEFFQEVAASDALALSVPDSNEVYFVPAFTGLGAPYWRPDVRGMISGLSRDTTRVHIVRAALEAQGYQTRDLMAAIEEDGGHHAEIIRVDGGLVANKFMCQFLADILNKPVEVPKITEATALGAAILAGLTVDLFADLEVTGCYWQRDKIYTPTITETERERLYAGWKAAVQSLLHASRN</sequence>
<accession>Q0AEC9</accession>
<proteinExistence type="inferred from homology"/>
<reference key="1">
    <citation type="journal article" date="2007" name="Environ. Microbiol.">
        <title>Whole-genome analysis of the ammonia-oxidizing bacterium, Nitrosomonas eutropha C91: implications for niche adaptation.</title>
        <authorList>
            <person name="Stein L.Y."/>
            <person name="Arp D.J."/>
            <person name="Berube P.M."/>
            <person name="Chain P.S."/>
            <person name="Hauser L."/>
            <person name="Jetten M.S."/>
            <person name="Klotz M.G."/>
            <person name="Larimer F.W."/>
            <person name="Norton J.M."/>
            <person name="Op den Camp H.J.M."/>
            <person name="Shin M."/>
            <person name="Wei X."/>
        </authorList>
    </citation>
    <scope>NUCLEOTIDE SEQUENCE [LARGE SCALE GENOMIC DNA]</scope>
    <source>
        <strain>DSM 101675 / C91 / Nm57</strain>
    </source>
</reference>
<feature type="chain" id="PRO_1000020751" description="Glycerol kinase">
    <location>
        <begin position="1"/>
        <end position="499"/>
    </location>
</feature>
<feature type="binding site" evidence="1">
    <location>
        <position position="14"/>
    </location>
    <ligand>
        <name>ADP</name>
        <dbReference type="ChEBI" id="CHEBI:456216"/>
    </ligand>
</feature>
<feature type="binding site" evidence="1">
    <location>
        <position position="14"/>
    </location>
    <ligand>
        <name>ATP</name>
        <dbReference type="ChEBI" id="CHEBI:30616"/>
    </ligand>
</feature>
<feature type="binding site" evidence="1">
    <location>
        <position position="14"/>
    </location>
    <ligand>
        <name>sn-glycerol 3-phosphate</name>
        <dbReference type="ChEBI" id="CHEBI:57597"/>
    </ligand>
</feature>
<feature type="binding site" evidence="1">
    <location>
        <position position="15"/>
    </location>
    <ligand>
        <name>ATP</name>
        <dbReference type="ChEBI" id="CHEBI:30616"/>
    </ligand>
</feature>
<feature type="binding site" evidence="1">
    <location>
        <position position="16"/>
    </location>
    <ligand>
        <name>ATP</name>
        <dbReference type="ChEBI" id="CHEBI:30616"/>
    </ligand>
</feature>
<feature type="binding site" evidence="1">
    <location>
        <position position="18"/>
    </location>
    <ligand>
        <name>ADP</name>
        <dbReference type="ChEBI" id="CHEBI:456216"/>
    </ligand>
</feature>
<feature type="binding site" evidence="1">
    <location>
        <position position="84"/>
    </location>
    <ligand>
        <name>glycerol</name>
        <dbReference type="ChEBI" id="CHEBI:17754"/>
    </ligand>
</feature>
<feature type="binding site" evidence="1">
    <location>
        <position position="84"/>
    </location>
    <ligand>
        <name>sn-glycerol 3-phosphate</name>
        <dbReference type="ChEBI" id="CHEBI:57597"/>
    </ligand>
</feature>
<feature type="binding site" evidence="1">
    <location>
        <position position="85"/>
    </location>
    <ligand>
        <name>glycerol</name>
        <dbReference type="ChEBI" id="CHEBI:17754"/>
    </ligand>
</feature>
<feature type="binding site" evidence="1">
    <location>
        <position position="85"/>
    </location>
    <ligand>
        <name>sn-glycerol 3-phosphate</name>
        <dbReference type="ChEBI" id="CHEBI:57597"/>
    </ligand>
</feature>
<feature type="binding site" evidence="1">
    <location>
        <position position="136"/>
    </location>
    <ligand>
        <name>glycerol</name>
        <dbReference type="ChEBI" id="CHEBI:17754"/>
    </ligand>
</feature>
<feature type="binding site" evidence="1">
    <location>
        <position position="136"/>
    </location>
    <ligand>
        <name>sn-glycerol 3-phosphate</name>
        <dbReference type="ChEBI" id="CHEBI:57597"/>
    </ligand>
</feature>
<feature type="binding site" evidence="1">
    <location>
        <position position="245"/>
    </location>
    <ligand>
        <name>glycerol</name>
        <dbReference type="ChEBI" id="CHEBI:17754"/>
    </ligand>
</feature>
<feature type="binding site" evidence="1">
    <location>
        <position position="245"/>
    </location>
    <ligand>
        <name>sn-glycerol 3-phosphate</name>
        <dbReference type="ChEBI" id="CHEBI:57597"/>
    </ligand>
</feature>
<feature type="binding site" evidence="1">
    <location>
        <position position="246"/>
    </location>
    <ligand>
        <name>glycerol</name>
        <dbReference type="ChEBI" id="CHEBI:17754"/>
    </ligand>
</feature>
<feature type="binding site" evidence="1">
    <location>
        <position position="267"/>
    </location>
    <ligand>
        <name>ADP</name>
        <dbReference type="ChEBI" id="CHEBI:456216"/>
    </ligand>
</feature>
<feature type="binding site" evidence="1">
    <location>
        <position position="267"/>
    </location>
    <ligand>
        <name>ATP</name>
        <dbReference type="ChEBI" id="CHEBI:30616"/>
    </ligand>
</feature>
<feature type="binding site" evidence="1">
    <location>
        <position position="310"/>
    </location>
    <ligand>
        <name>ADP</name>
        <dbReference type="ChEBI" id="CHEBI:456216"/>
    </ligand>
</feature>
<feature type="binding site" evidence="1">
    <location>
        <position position="310"/>
    </location>
    <ligand>
        <name>ATP</name>
        <dbReference type="ChEBI" id="CHEBI:30616"/>
    </ligand>
</feature>
<feature type="binding site" evidence="1">
    <location>
        <position position="314"/>
    </location>
    <ligand>
        <name>ATP</name>
        <dbReference type="ChEBI" id="CHEBI:30616"/>
    </ligand>
</feature>
<feature type="binding site" evidence="1">
    <location>
        <position position="411"/>
    </location>
    <ligand>
        <name>ADP</name>
        <dbReference type="ChEBI" id="CHEBI:456216"/>
    </ligand>
</feature>
<feature type="binding site" evidence="1">
    <location>
        <position position="411"/>
    </location>
    <ligand>
        <name>ATP</name>
        <dbReference type="ChEBI" id="CHEBI:30616"/>
    </ligand>
</feature>
<feature type="binding site" evidence="1">
    <location>
        <position position="415"/>
    </location>
    <ligand>
        <name>ADP</name>
        <dbReference type="ChEBI" id="CHEBI:456216"/>
    </ligand>
</feature>
<protein>
    <recommendedName>
        <fullName evidence="1">Glycerol kinase</fullName>
        <ecNumber evidence="1">2.7.1.30</ecNumber>
    </recommendedName>
    <alternativeName>
        <fullName evidence="1">ATP:glycerol 3-phosphotransferase</fullName>
    </alternativeName>
    <alternativeName>
        <fullName evidence="1">Glycerokinase</fullName>
        <shortName evidence="1">GK</shortName>
    </alternativeName>
</protein>